<reference key="1">
    <citation type="journal article" date="2010" name="PLoS ONE">
        <title>The complete multipartite genome sequence of Cupriavidus necator JMP134, a versatile pollutant degrader.</title>
        <authorList>
            <person name="Lykidis A."/>
            <person name="Perez-Pantoja D."/>
            <person name="Ledger T."/>
            <person name="Mavromatis K."/>
            <person name="Anderson I.J."/>
            <person name="Ivanova N.N."/>
            <person name="Hooper S.D."/>
            <person name="Lapidus A."/>
            <person name="Lucas S."/>
            <person name="Gonzalez B."/>
            <person name="Kyrpides N.C."/>
        </authorList>
    </citation>
    <scope>NUCLEOTIDE SEQUENCE [LARGE SCALE GENOMIC DNA]</scope>
    <source>
        <strain>JMP134 / LMG 1197</strain>
    </source>
</reference>
<evidence type="ECO:0000255" key="1">
    <source>
        <dbReference type="HAMAP-Rule" id="MF_01382"/>
    </source>
</evidence>
<sequence>MITGLLKKVFGSRNERLIKQYRRTVEQINALEPKFEQLSDDQLRGMTETFRQRHAGGESLESLLPEAFAVCREASKRIMKMRHFDVQLIGGMVLNDNKIAEMRTGEGKTLTATLAVYLNAITGKGVHVVTVNDYLAQRDAEWMGRLYNYLGLSVGVNLSQMAHDQKQAAYNADITYGTNNEFGFDYLRDNMVYDPSQRVQRPLNYAIVDEVDSILIDEARTPLIISGQAENHTDLYQRMNGIPRLLERQIGEEKADGTGVEKPGDYYVDEKGHQVYLTEAGHEKAEEILAQQGLIGEGESLYAPQNITLMHHLYAALRAHSLFHRDQHYVVQNDEVVIVDEFTGRLMTGRRWSDGLHQAVEAKEGVSIQQENQTLATITFQNYFRMYTKLAGMTGTADTEAYEFQEIYGLEVVVIPTNRAAQRKDLQDQIYKTSKERYDAVVRDIRDCYDRGQPVLVGTTSIETSEYLSDLLNKEKLPHQVLNAKQHEREAEIVAQAGRPKMITIATNMAGRGTDIVLGGNVEKQAGFVEIDPNLSDADKAARIQQLKDEWQSLHEQVKSFGGLHIVGTERHESRRIDNQLRGRAGRQGDPGSSRFYLSLDDQLLRIFAGDRVRAIMERLKMPEGEPIEAGIVTRSIESAQRKVEGRNFDIRKQLLQYDDVANDQRKEIYKLRNDVLEANDVGEMVKNLRESVLIELFREHVAADTMEEQWDIAGLETRLREDWGLELPLAKTIEGAQSIEDEALLDMILKAAEERYEGKVAMVGRESFAGFERSVMLQSIDSHWREHLAALDHLRQGIHLRGYAQKDPKQEYKRESFELFARLLDVIKNEVTRVTFNVQIQSPEELEQASEQIEEGLSHLENVQYKHDEFAEGREPVEDAPSLRTGAAVAAEMAVAGMPKVGRNDPCPCGSGKKFKQCHGKLS</sequence>
<name>SECA_CUPPJ</name>
<gene>
    <name evidence="1" type="primary">secA</name>
    <name type="ordered locus">Reut_A2970</name>
</gene>
<accession>Q46X03</accession>
<feature type="chain" id="PRO_0000320911" description="Protein translocase subunit SecA">
    <location>
        <begin position="1"/>
        <end position="924"/>
    </location>
</feature>
<feature type="binding site" evidence="1">
    <location>
        <position position="87"/>
    </location>
    <ligand>
        <name>ATP</name>
        <dbReference type="ChEBI" id="CHEBI:30616"/>
    </ligand>
</feature>
<feature type="binding site" evidence="1">
    <location>
        <begin position="105"/>
        <end position="109"/>
    </location>
    <ligand>
        <name>ATP</name>
        <dbReference type="ChEBI" id="CHEBI:30616"/>
    </ligand>
</feature>
<feature type="binding site" evidence="1">
    <location>
        <position position="515"/>
    </location>
    <ligand>
        <name>ATP</name>
        <dbReference type="ChEBI" id="CHEBI:30616"/>
    </ligand>
</feature>
<feature type="binding site" evidence="1">
    <location>
        <position position="908"/>
    </location>
    <ligand>
        <name>Zn(2+)</name>
        <dbReference type="ChEBI" id="CHEBI:29105"/>
    </ligand>
</feature>
<feature type="binding site" evidence="1">
    <location>
        <position position="910"/>
    </location>
    <ligand>
        <name>Zn(2+)</name>
        <dbReference type="ChEBI" id="CHEBI:29105"/>
    </ligand>
</feature>
<feature type="binding site" evidence="1">
    <location>
        <position position="919"/>
    </location>
    <ligand>
        <name>Zn(2+)</name>
        <dbReference type="ChEBI" id="CHEBI:29105"/>
    </ligand>
</feature>
<feature type="binding site" evidence="1">
    <location>
        <position position="920"/>
    </location>
    <ligand>
        <name>Zn(2+)</name>
        <dbReference type="ChEBI" id="CHEBI:29105"/>
    </ligand>
</feature>
<protein>
    <recommendedName>
        <fullName evidence="1">Protein translocase subunit SecA</fullName>
        <ecNumber evidence="1">7.4.2.8</ecNumber>
    </recommendedName>
</protein>
<dbReference type="EC" id="7.4.2.8" evidence="1"/>
<dbReference type="EMBL" id="CP000090">
    <property type="protein sequence ID" value="AAZ62330.1"/>
    <property type="molecule type" value="Genomic_DNA"/>
</dbReference>
<dbReference type="SMR" id="Q46X03"/>
<dbReference type="STRING" id="264198.Reut_A2970"/>
<dbReference type="KEGG" id="reu:Reut_A2970"/>
<dbReference type="eggNOG" id="COG0653">
    <property type="taxonomic scope" value="Bacteria"/>
</dbReference>
<dbReference type="HOGENOM" id="CLU_005314_3_0_4"/>
<dbReference type="OrthoDB" id="9805579at2"/>
<dbReference type="GO" id="GO:0031522">
    <property type="term" value="C:cell envelope Sec protein transport complex"/>
    <property type="evidence" value="ECO:0007669"/>
    <property type="project" value="TreeGrafter"/>
</dbReference>
<dbReference type="GO" id="GO:0005829">
    <property type="term" value="C:cytosol"/>
    <property type="evidence" value="ECO:0007669"/>
    <property type="project" value="TreeGrafter"/>
</dbReference>
<dbReference type="GO" id="GO:0005886">
    <property type="term" value="C:plasma membrane"/>
    <property type="evidence" value="ECO:0007669"/>
    <property type="project" value="UniProtKB-SubCell"/>
</dbReference>
<dbReference type="GO" id="GO:0005524">
    <property type="term" value="F:ATP binding"/>
    <property type="evidence" value="ECO:0007669"/>
    <property type="project" value="UniProtKB-UniRule"/>
</dbReference>
<dbReference type="GO" id="GO:0046872">
    <property type="term" value="F:metal ion binding"/>
    <property type="evidence" value="ECO:0007669"/>
    <property type="project" value="UniProtKB-KW"/>
</dbReference>
<dbReference type="GO" id="GO:0008564">
    <property type="term" value="F:protein-exporting ATPase activity"/>
    <property type="evidence" value="ECO:0007669"/>
    <property type="project" value="UniProtKB-EC"/>
</dbReference>
<dbReference type="GO" id="GO:0065002">
    <property type="term" value="P:intracellular protein transmembrane transport"/>
    <property type="evidence" value="ECO:0007669"/>
    <property type="project" value="UniProtKB-UniRule"/>
</dbReference>
<dbReference type="GO" id="GO:0017038">
    <property type="term" value="P:protein import"/>
    <property type="evidence" value="ECO:0007669"/>
    <property type="project" value="InterPro"/>
</dbReference>
<dbReference type="GO" id="GO:0006605">
    <property type="term" value="P:protein targeting"/>
    <property type="evidence" value="ECO:0007669"/>
    <property type="project" value="UniProtKB-UniRule"/>
</dbReference>
<dbReference type="GO" id="GO:0043952">
    <property type="term" value="P:protein transport by the Sec complex"/>
    <property type="evidence" value="ECO:0007669"/>
    <property type="project" value="TreeGrafter"/>
</dbReference>
<dbReference type="CDD" id="cd17928">
    <property type="entry name" value="DEXDc_SecA"/>
    <property type="match status" value="1"/>
</dbReference>
<dbReference type="CDD" id="cd18803">
    <property type="entry name" value="SF2_C_secA"/>
    <property type="match status" value="1"/>
</dbReference>
<dbReference type="FunFam" id="3.40.50.300:FF:000081">
    <property type="entry name" value="Preprotein translocase subunit SecA"/>
    <property type="match status" value="1"/>
</dbReference>
<dbReference type="FunFam" id="3.40.50.300:FF:000113">
    <property type="entry name" value="Preprotein translocase subunit SecA"/>
    <property type="match status" value="1"/>
</dbReference>
<dbReference type="FunFam" id="3.90.1440.10:FF:000001">
    <property type="entry name" value="Preprotein translocase subunit SecA"/>
    <property type="match status" value="1"/>
</dbReference>
<dbReference type="FunFam" id="1.10.3060.10:FF:000003">
    <property type="entry name" value="Protein translocase subunit SecA"/>
    <property type="match status" value="1"/>
</dbReference>
<dbReference type="Gene3D" id="1.10.3060.10">
    <property type="entry name" value="Helical scaffold and wing domains of SecA"/>
    <property type="match status" value="1"/>
</dbReference>
<dbReference type="Gene3D" id="3.40.50.300">
    <property type="entry name" value="P-loop containing nucleotide triphosphate hydrolases"/>
    <property type="match status" value="2"/>
</dbReference>
<dbReference type="Gene3D" id="3.90.1440.10">
    <property type="entry name" value="SecA, preprotein cross-linking domain"/>
    <property type="match status" value="1"/>
</dbReference>
<dbReference type="HAMAP" id="MF_01382">
    <property type="entry name" value="SecA"/>
    <property type="match status" value="1"/>
</dbReference>
<dbReference type="InterPro" id="IPR014001">
    <property type="entry name" value="Helicase_ATP-bd"/>
</dbReference>
<dbReference type="InterPro" id="IPR001650">
    <property type="entry name" value="Helicase_C-like"/>
</dbReference>
<dbReference type="InterPro" id="IPR027417">
    <property type="entry name" value="P-loop_NTPase"/>
</dbReference>
<dbReference type="InterPro" id="IPR004027">
    <property type="entry name" value="SEC_C_motif"/>
</dbReference>
<dbReference type="InterPro" id="IPR000185">
    <property type="entry name" value="SecA"/>
</dbReference>
<dbReference type="InterPro" id="IPR020937">
    <property type="entry name" value="SecA_CS"/>
</dbReference>
<dbReference type="InterPro" id="IPR011115">
    <property type="entry name" value="SecA_DEAD"/>
</dbReference>
<dbReference type="InterPro" id="IPR014018">
    <property type="entry name" value="SecA_motor_DEAD"/>
</dbReference>
<dbReference type="InterPro" id="IPR011130">
    <property type="entry name" value="SecA_preprotein_X-link_dom"/>
</dbReference>
<dbReference type="InterPro" id="IPR044722">
    <property type="entry name" value="SecA_SF2_C"/>
</dbReference>
<dbReference type="InterPro" id="IPR011116">
    <property type="entry name" value="SecA_Wing/Scaffold"/>
</dbReference>
<dbReference type="InterPro" id="IPR036266">
    <property type="entry name" value="SecA_Wing/Scaffold_sf"/>
</dbReference>
<dbReference type="InterPro" id="IPR036670">
    <property type="entry name" value="SecA_X-link_sf"/>
</dbReference>
<dbReference type="NCBIfam" id="NF009538">
    <property type="entry name" value="PRK12904.1"/>
    <property type="match status" value="1"/>
</dbReference>
<dbReference type="NCBIfam" id="TIGR00963">
    <property type="entry name" value="secA"/>
    <property type="match status" value="1"/>
</dbReference>
<dbReference type="PANTHER" id="PTHR30612:SF0">
    <property type="entry name" value="CHLOROPLAST PROTEIN-TRANSPORTING ATPASE"/>
    <property type="match status" value="1"/>
</dbReference>
<dbReference type="PANTHER" id="PTHR30612">
    <property type="entry name" value="SECA INNER MEMBRANE COMPONENT OF SEC PROTEIN SECRETION SYSTEM"/>
    <property type="match status" value="1"/>
</dbReference>
<dbReference type="Pfam" id="PF21090">
    <property type="entry name" value="P-loop_SecA"/>
    <property type="match status" value="1"/>
</dbReference>
<dbReference type="Pfam" id="PF02810">
    <property type="entry name" value="SEC-C"/>
    <property type="match status" value="1"/>
</dbReference>
<dbReference type="Pfam" id="PF07517">
    <property type="entry name" value="SecA_DEAD"/>
    <property type="match status" value="1"/>
</dbReference>
<dbReference type="Pfam" id="PF01043">
    <property type="entry name" value="SecA_PP_bind"/>
    <property type="match status" value="1"/>
</dbReference>
<dbReference type="Pfam" id="PF07516">
    <property type="entry name" value="SecA_SW"/>
    <property type="match status" value="1"/>
</dbReference>
<dbReference type="PRINTS" id="PR00906">
    <property type="entry name" value="SECA"/>
</dbReference>
<dbReference type="SMART" id="SM00957">
    <property type="entry name" value="SecA_DEAD"/>
    <property type="match status" value="1"/>
</dbReference>
<dbReference type="SMART" id="SM00958">
    <property type="entry name" value="SecA_PP_bind"/>
    <property type="match status" value="1"/>
</dbReference>
<dbReference type="SUPFAM" id="SSF81886">
    <property type="entry name" value="Helical scaffold and wing domains of SecA"/>
    <property type="match status" value="1"/>
</dbReference>
<dbReference type="SUPFAM" id="SSF52540">
    <property type="entry name" value="P-loop containing nucleoside triphosphate hydrolases"/>
    <property type="match status" value="2"/>
</dbReference>
<dbReference type="SUPFAM" id="SSF81767">
    <property type="entry name" value="Pre-protein crosslinking domain of SecA"/>
    <property type="match status" value="1"/>
</dbReference>
<dbReference type="PROSITE" id="PS01312">
    <property type="entry name" value="SECA"/>
    <property type="match status" value="1"/>
</dbReference>
<dbReference type="PROSITE" id="PS51196">
    <property type="entry name" value="SECA_MOTOR_DEAD"/>
    <property type="match status" value="1"/>
</dbReference>
<keyword id="KW-0067">ATP-binding</keyword>
<keyword id="KW-0997">Cell inner membrane</keyword>
<keyword id="KW-1003">Cell membrane</keyword>
<keyword id="KW-0963">Cytoplasm</keyword>
<keyword id="KW-0472">Membrane</keyword>
<keyword id="KW-0479">Metal-binding</keyword>
<keyword id="KW-0547">Nucleotide-binding</keyword>
<keyword id="KW-0653">Protein transport</keyword>
<keyword id="KW-1278">Translocase</keyword>
<keyword id="KW-0811">Translocation</keyword>
<keyword id="KW-0813">Transport</keyword>
<keyword id="KW-0862">Zinc</keyword>
<comment type="function">
    <text evidence="1">Part of the Sec protein translocase complex. Interacts with the SecYEG preprotein conducting channel. Has a central role in coupling the hydrolysis of ATP to the transfer of proteins into and across the cell membrane, serving both as a receptor for the preprotein-SecB complex and as an ATP-driven molecular motor driving the stepwise translocation of polypeptide chains across the membrane.</text>
</comment>
<comment type="catalytic activity">
    <reaction evidence="1">
        <text>ATP + H2O + cellular proteinSide 1 = ADP + phosphate + cellular proteinSide 2.</text>
        <dbReference type="EC" id="7.4.2.8"/>
    </reaction>
</comment>
<comment type="cofactor">
    <cofactor evidence="1">
        <name>Zn(2+)</name>
        <dbReference type="ChEBI" id="CHEBI:29105"/>
    </cofactor>
    <text evidence="1">May bind 1 zinc ion per subunit.</text>
</comment>
<comment type="subunit">
    <text evidence="1">Monomer and homodimer. Part of the essential Sec protein translocation apparatus which comprises SecA, SecYEG and auxiliary proteins SecDF-YajC and YidC.</text>
</comment>
<comment type="subcellular location">
    <subcellularLocation>
        <location evidence="1">Cell inner membrane</location>
        <topology evidence="1">Peripheral membrane protein</topology>
        <orientation evidence="1">Cytoplasmic side</orientation>
    </subcellularLocation>
    <subcellularLocation>
        <location evidence="1">Cytoplasm</location>
    </subcellularLocation>
    <text evidence="1">Distribution is 50-50.</text>
</comment>
<comment type="similarity">
    <text evidence="1">Belongs to the SecA family.</text>
</comment>
<organism>
    <name type="scientific">Cupriavidus pinatubonensis (strain JMP 134 / LMG 1197)</name>
    <name type="common">Cupriavidus necator (strain JMP 134)</name>
    <dbReference type="NCBI Taxonomy" id="264198"/>
    <lineage>
        <taxon>Bacteria</taxon>
        <taxon>Pseudomonadati</taxon>
        <taxon>Pseudomonadota</taxon>
        <taxon>Betaproteobacteria</taxon>
        <taxon>Burkholderiales</taxon>
        <taxon>Burkholderiaceae</taxon>
        <taxon>Cupriavidus</taxon>
    </lineage>
</organism>
<proteinExistence type="inferred from homology"/>